<sequence length="876" mass="97155">MSDLAREITPVNIEEELKSSYLDYAMSVIVGRALPDVRDGLKPVHRRVLYAMNVLGNDWNKAYKKSARVVGDVIGKYHPHGDTAVYDTIVRMAQPFSLRYMLVDGQGNFGSVDGDSAAAMRYTEIRMSKIAHELMADLEKETVDFVDNYDGTEKIPDVMPTKIPNLLVNGSFGIAVGMATNIPPHNLTEVINGRLAYVEDEEISIEGLMEHIPGPDFPTAAIINGRRGIEEAYRTGRGKVYICARAEVEADAKTGRETIIVHEIPYQVNKARLIEKIAELVKEKRVEGISALRDESDKDGMRIVIEVKRDAVGRVVLNNLYSQTQLQVSFGINMVALHHGQPKIMNLKEIIAAFVRHRREVVTRRTILALRKARDRADILEALSIALANIDPIIELIRRAPTPAEAKAGLIARSWDLGNVSAMLEAGDDAARPEWLEPEFGVRDGQYYLTEQQAQAILDLRLQKLTGLEHEKLLDEYKELLEQIAELLHILGSADRLMEVIREELELVREQFGDARRTDITANSVDINIEDLITQEDVVVTLSHEGYVKYQPVNDYEAQRRGGKGKSAPRIKEEDFIDRLLVANTHDTILCFSSRGRLYWMKVYQVPEASRGARGRPIVNLLPLEANERYTAILPVREYEEGVNVFMATASGTVKKTPADEFSRPRSAGIIAVNLNEGDELIGVDLTSGQDEVMLFSAAGKVVRFKEDDVRAMGRTATGVRGIKLAGEDKVVSLIVPRGEGRILTATENGYRKRTAVAEYPTKSRATQGVISIKVTERNGSVVGAVQVDDCDQIMMITDAGTLVRIRVSEVSIVGRNTQGVILIRTAEDENVVALQRVAEPVDDEELDAIDGSAAEGDEDIAPEADTDDDIAEDEE</sequence>
<feature type="chain" id="PRO_0000145238" description="DNA gyrase subunit A">
    <location>
        <begin position="1"/>
        <end position="876"/>
    </location>
</feature>
<feature type="domain" description="Topo IIA-type catalytic" evidence="2">
    <location>
        <begin position="34"/>
        <end position="532"/>
    </location>
</feature>
<feature type="region of interest" description="Disordered" evidence="3">
    <location>
        <begin position="844"/>
        <end position="876"/>
    </location>
</feature>
<feature type="short sequence motif" description="GyrA-box" evidence="1">
    <location>
        <begin position="559"/>
        <end position="565"/>
    </location>
</feature>
<feature type="compositionally biased region" description="Acidic residues" evidence="3">
    <location>
        <begin position="856"/>
        <end position="876"/>
    </location>
</feature>
<feature type="active site" description="O-(5'-phospho-DNA)-tyrosine intermediate" evidence="1">
    <location>
        <position position="122"/>
    </location>
</feature>
<reference key="1">
    <citation type="journal article" date="1990" name="Nucleic Acids Res.">
        <title>Cloning and sequence analysis of gyrA gene of Klebsiella pneumoniae.</title>
        <authorList>
            <person name="Dimri G.P."/>
            <person name="Das H.K."/>
        </authorList>
    </citation>
    <scope>NUCLEOTIDE SEQUENCE [GENOMIC DNA]</scope>
    <source>
        <strain>M5a1</strain>
    </source>
</reference>
<proteinExistence type="inferred from homology"/>
<gene>
    <name evidence="1" type="primary">gyrA</name>
</gene>
<organism>
    <name type="scientific">Klebsiella oxytoca</name>
    <dbReference type="NCBI Taxonomy" id="571"/>
    <lineage>
        <taxon>Bacteria</taxon>
        <taxon>Pseudomonadati</taxon>
        <taxon>Pseudomonadota</taxon>
        <taxon>Gammaproteobacteria</taxon>
        <taxon>Enterobacterales</taxon>
        <taxon>Enterobacteriaceae</taxon>
        <taxon>Klebsiella/Raoultella group</taxon>
        <taxon>Klebsiella</taxon>
    </lineage>
</organism>
<comment type="function">
    <text evidence="1">A type II topoisomerase that negatively supercoils closed circular double-stranded (ds) DNA in an ATP-dependent manner to modulate DNA topology and maintain chromosomes in an underwound state. Negative supercoiling favors strand separation, and DNA replication, transcription, recombination and repair, all of which involve strand separation. Also able to catalyze the interconversion of other topological isomers of dsDNA rings, including catenanes and knotted rings. Type II topoisomerases break and join 2 DNA strands simultaneously in an ATP-dependent manner.</text>
</comment>
<comment type="catalytic activity">
    <reaction evidence="1">
        <text>ATP-dependent breakage, passage and rejoining of double-stranded DNA.</text>
        <dbReference type="EC" id="5.6.2.2"/>
    </reaction>
</comment>
<comment type="subunit">
    <text evidence="1">Heterotetramer, composed of two GyrA and two GyrB chains. In the heterotetramer, GyrA contains the active site tyrosine that forms a transient covalent intermediate with DNA, while GyrB binds cofactors and catalyzes ATP hydrolysis.</text>
</comment>
<comment type="subcellular location">
    <subcellularLocation>
        <location evidence="1">Cytoplasm</location>
    </subcellularLocation>
</comment>
<comment type="miscellaneous">
    <text evidence="1">Few gyrases are as efficient as E.coli at forming negative supercoils. Not all organisms have 2 type II topoisomerases; in organisms with a single type II topoisomerase this enzyme also has to decatenate newly replicated chromosomes.</text>
</comment>
<comment type="similarity">
    <text evidence="1">Belongs to the type II topoisomerase GyrA/ParC subunit family.</text>
</comment>
<name>GYRA_KLEOX</name>
<keyword id="KW-0067">ATP-binding</keyword>
<keyword id="KW-0963">Cytoplasm</keyword>
<keyword id="KW-0238">DNA-binding</keyword>
<keyword id="KW-0413">Isomerase</keyword>
<keyword id="KW-0547">Nucleotide-binding</keyword>
<keyword id="KW-0799">Topoisomerase</keyword>
<protein>
    <recommendedName>
        <fullName evidence="1">DNA gyrase subunit A</fullName>
        <ecNumber evidence="1">5.6.2.2</ecNumber>
    </recommendedName>
</protein>
<dbReference type="EC" id="5.6.2.2" evidence="1"/>
<dbReference type="EMBL" id="X16817">
    <property type="protein sequence ID" value="CAA34724.1"/>
    <property type="molecule type" value="Genomic_DNA"/>
</dbReference>
<dbReference type="PIR" id="S07722">
    <property type="entry name" value="ITKBAP"/>
</dbReference>
<dbReference type="SMR" id="P14829"/>
<dbReference type="STRING" id="571.AB185_15975"/>
<dbReference type="eggNOG" id="COG0188">
    <property type="taxonomic scope" value="Bacteria"/>
</dbReference>
<dbReference type="GO" id="GO:0005694">
    <property type="term" value="C:chromosome"/>
    <property type="evidence" value="ECO:0007669"/>
    <property type="project" value="InterPro"/>
</dbReference>
<dbReference type="GO" id="GO:0005737">
    <property type="term" value="C:cytoplasm"/>
    <property type="evidence" value="ECO:0007669"/>
    <property type="project" value="UniProtKB-SubCell"/>
</dbReference>
<dbReference type="GO" id="GO:0009330">
    <property type="term" value="C:DNA topoisomerase type II (double strand cut, ATP-hydrolyzing) complex"/>
    <property type="evidence" value="ECO:0007669"/>
    <property type="project" value="TreeGrafter"/>
</dbReference>
<dbReference type="GO" id="GO:0005524">
    <property type="term" value="F:ATP binding"/>
    <property type="evidence" value="ECO:0007669"/>
    <property type="project" value="UniProtKB-UniRule"/>
</dbReference>
<dbReference type="GO" id="GO:0003677">
    <property type="term" value="F:DNA binding"/>
    <property type="evidence" value="ECO:0007669"/>
    <property type="project" value="UniProtKB-UniRule"/>
</dbReference>
<dbReference type="GO" id="GO:0034335">
    <property type="term" value="F:DNA negative supercoiling activity"/>
    <property type="evidence" value="ECO:0007669"/>
    <property type="project" value="UniProtKB-ARBA"/>
</dbReference>
<dbReference type="GO" id="GO:0006265">
    <property type="term" value="P:DNA topological change"/>
    <property type="evidence" value="ECO:0007669"/>
    <property type="project" value="UniProtKB-UniRule"/>
</dbReference>
<dbReference type="GO" id="GO:0006261">
    <property type="term" value="P:DNA-templated DNA replication"/>
    <property type="evidence" value="ECO:0007669"/>
    <property type="project" value="UniProtKB-UniRule"/>
</dbReference>
<dbReference type="CDD" id="cd00187">
    <property type="entry name" value="TOP4c"/>
    <property type="match status" value="1"/>
</dbReference>
<dbReference type="FunFam" id="2.120.10.90:FF:000002">
    <property type="entry name" value="DNA gyrase subunit A"/>
    <property type="match status" value="1"/>
</dbReference>
<dbReference type="FunFam" id="3.30.1360.40:FF:000002">
    <property type="entry name" value="DNA gyrase subunit A"/>
    <property type="match status" value="1"/>
</dbReference>
<dbReference type="FunFam" id="3.90.199.10:FF:000001">
    <property type="entry name" value="DNA gyrase subunit A"/>
    <property type="match status" value="1"/>
</dbReference>
<dbReference type="Gene3D" id="3.30.1360.40">
    <property type="match status" value="1"/>
</dbReference>
<dbReference type="Gene3D" id="2.120.10.90">
    <property type="entry name" value="DNA gyrase/topoisomerase IV, subunit A, C-terminal"/>
    <property type="match status" value="1"/>
</dbReference>
<dbReference type="Gene3D" id="3.90.199.10">
    <property type="entry name" value="Topoisomerase II, domain 5"/>
    <property type="match status" value="1"/>
</dbReference>
<dbReference type="Gene3D" id="1.10.268.10">
    <property type="entry name" value="Topoisomerase, domain 3"/>
    <property type="match status" value="1"/>
</dbReference>
<dbReference type="HAMAP" id="MF_01897">
    <property type="entry name" value="GyrA"/>
    <property type="match status" value="1"/>
</dbReference>
<dbReference type="InterPro" id="IPR005743">
    <property type="entry name" value="GyrA"/>
</dbReference>
<dbReference type="InterPro" id="IPR006691">
    <property type="entry name" value="GyrA/parC_rep"/>
</dbReference>
<dbReference type="InterPro" id="IPR035516">
    <property type="entry name" value="Gyrase/topoIV_suA_C"/>
</dbReference>
<dbReference type="InterPro" id="IPR013760">
    <property type="entry name" value="Topo_IIA-like_dom_sf"/>
</dbReference>
<dbReference type="InterPro" id="IPR013758">
    <property type="entry name" value="Topo_IIA_A/C_ab"/>
</dbReference>
<dbReference type="InterPro" id="IPR013757">
    <property type="entry name" value="Topo_IIA_A_a_sf"/>
</dbReference>
<dbReference type="InterPro" id="IPR002205">
    <property type="entry name" value="Topo_IIA_dom_A"/>
</dbReference>
<dbReference type="InterPro" id="IPR050220">
    <property type="entry name" value="Type_II_DNA_Topoisomerases"/>
</dbReference>
<dbReference type="NCBIfam" id="TIGR01063">
    <property type="entry name" value="gyrA"/>
    <property type="match status" value="1"/>
</dbReference>
<dbReference type="NCBIfam" id="NF004043">
    <property type="entry name" value="PRK05560.1"/>
    <property type="match status" value="1"/>
</dbReference>
<dbReference type="NCBIfam" id="NF004044">
    <property type="entry name" value="PRK05561.1"/>
    <property type="match status" value="1"/>
</dbReference>
<dbReference type="PANTHER" id="PTHR43493:SF5">
    <property type="entry name" value="DNA GYRASE SUBUNIT A, CHLOROPLASTIC_MITOCHONDRIAL"/>
    <property type="match status" value="1"/>
</dbReference>
<dbReference type="PANTHER" id="PTHR43493">
    <property type="entry name" value="DNA GYRASE/TOPOISOMERASE SUBUNIT A"/>
    <property type="match status" value="1"/>
</dbReference>
<dbReference type="Pfam" id="PF03989">
    <property type="entry name" value="DNA_gyraseA_C"/>
    <property type="match status" value="6"/>
</dbReference>
<dbReference type="Pfam" id="PF00521">
    <property type="entry name" value="DNA_topoisoIV"/>
    <property type="match status" value="1"/>
</dbReference>
<dbReference type="SMART" id="SM00434">
    <property type="entry name" value="TOP4c"/>
    <property type="match status" value="1"/>
</dbReference>
<dbReference type="SUPFAM" id="SSF101904">
    <property type="entry name" value="GyrA/ParC C-terminal domain-like"/>
    <property type="match status" value="1"/>
</dbReference>
<dbReference type="SUPFAM" id="SSF56719">
    <property type="entry name" value="Type II DNA topoisomerase"/>
    <property type="match status" value="1"/>
</dbReference>
<dbReference type="PROSITE" id="PS52040">
    <property type="entry name" value="TOPO_IIA"/>
    <property type="match status" value="1"/>
</dbReference>
<accession>P14829</accession>
<evidence type="ECO:0000255" key="1">
    <source>
        <dbReference type="HAMAP-Rule" id="MF_01897"/>
    </source>
</evidence>
<evidence type="ECO:0000255" key="2">
    <source>
        <dbReference type="PROSITE-ProRule" id="PRU01384"/>
    </source>
</evidence>
<evidence type="ECO:0000256" key="3">
    <source>
        <dbReference type="SAM" id="MobiDB-lite"/>
    </source>
</evidence>